<gene>
    <name type="ordered locus">ECU05_0590</name>
</gene>
<protein>
    <recommendedName>
        <fullName>Uncharacterized protein ECU05_0590</fullName>
    </recommendedName>
</protein>
<dbReference type="EMBL" id="AL590445">
    <property type="protein sequence ID" value="CAD26578.1"/>
    <property type="molecule type" value="Genomic_DNA"/>
</dbReference>
<dbReference type="RefSeq" id="NP_597401.1">
    <property type="nucleotide sequence ID" value="NM_001041267.1"/>
</dbReference>
<dbReference type="SMR" id="Q8SVK8"/>
<dbReference type="GeneID" id="859065"/>
<dbReference type="KEGG" id="ecu:ECU05_0590"/>
<dbReference type="VEuPathDB" id="MicrosporidiaDB:ECU05_0590"/>
<dbReference type="HOGENOM" id="CLU_1219685_0_0_1"/>
<dbReference type="InParanoid" id="Q8SVK8"/>
<dbReference type="OrthoDB" id="2190493at2759"/>
<dbReference type="Proteomes" id="UP000000819">
    <property type="component" value="Chromosome V"/>
</dbReference>
<organism>
    <name type="scientific">Encephalitozoon cuniculi (strain GB-M1)</name>
    <name type="common">Microsporidian parasite</name>
    <dbReference type="NCBI Taxonomy" id="284813"/>
    <lineage>
        <taxon>Eukaryota</taxon>
        <taxon>Fungi</taxon>
        <taxon>Fungi incertae sedis</taxon>
        <taxon>Microsporidia</taxon>
        <taxon>Unikaryonidae</taxon>
        <taxon>Encephalitozoon</taxon>
    </lineage>
</organism>
<evidence type="ECO:0000255" key="1"/>
<evidence type="ECO:0000269" key="2">
    <source>
    </source>
</evidence>
<comment type="developmental stage">
    <text evidence="2">Expressed in late sporogonial stages.</text>
</comment>
<reference key="1">
    <citation type="journal article" date="2001" name="Nature">
        <title>Genome sequence and gene compaction of the eukaryote parasite Encephalitozoon cuniculi.</title>
        <authorList>
            <person name="Katinka M.D."/>
            <person name="Duprat S."/>
            <person name="Cornillot E."/>
            <person name="Metenier G."/>
            <person name="Thomarat F."/>
            <person name="Prensier G."/>
            <person name="Barbe V."/>
            <person name="Peyretaillade E."/>
            <person name="Brottier P."/>
            <person name="Wincker P."/>
            <person name="Delbac F."/>
            <person name="El Alaoui H."/>
            <person name="Peyret P."/>
            <person name="Saurin W."/>
            <person name="Gouy M."/>
            <person name="Weissenbach J."/>
            <person name="Vivares C.P."/>
        </authorList>
    </citation>
    <scope>NUCLEOTIDE SEQUENCE [LARGE SCALE GENOMIC DNA]</scope>
    <source>
        <strain>GB-M1</strain>
    </source>
</reference>
<reference key="2">
    <citation type="journal article" date="2006" name="Proteomics">
        <title>Proteomic analysis of the eukaryotic parasite Encephalitozoon cuniculi (microsporidia): a reference map for proteins expressed in late sporogonial stages.</title>
        <authorList>
            <person name="Brosson D."/>
            <person name="Kuhn L."/>
            <person name="Delbac F."/>
            <person name="Garin J."/>
            <person name="Vivares C.P."/>
            <person name="Texier C."/>
        </authorList>
    </citation>
    <scope>IDENTIFICATION BY MASS SPECTROMETRY [LARGE SCALE ANALYSIS]</scope>
    <scope>DEVELOPMENTAL STAGE</scope>
</reference>
<proteinExistence type="evidence at protein level"/>
<feature type="signal peptide" evidence="1">
    <location>
        <begin position="1"/>
        <end position="15"/>
    </location>
</feature>
<feature type="chain" id="PRO_0000382772" description="Uncharacterized protein ECU05_0590">
    <location>
        <begin position="16"/>
        <end position="251"/>
    </location>
</feature>
<feature type="glycosylation site" description="N-linked (GlcNAc...) asparagine" evidence="1">
    <location>
        <position position="225"/>
    </location>
</feature>
<feature type="glycosylation site" description="N-linked (GlcNAc...) asparagine" evidence="1">
    <location>
        <position position="242"/>
    </location>
</feature>
<name>Y559_ENCCU</name>
<accession>Q8SVK8</accession>
<sequence length="251" mass="28366">MSAISSLVLIGWAMCLENSYKYYDPVLQPTNFYKPSTAAFLESRPLMFAPEQLSRNAILHNPVAFGEGNFYKLLYPSMTRLTSYLNDHSPLFGDWYRSPSLIMSKSDKEEVISGLYKAQPKGDKDLKEFWGFIMGELLIRDLPELKKSLGELKGIQNEERKKKSVAEFKDIADQKDNDENSFFGTAWFILDCLSLGVSNRNAEIYGDVIGPFVDAAIAFKSLEHNFSNIIGSSRSMSSYRTNSTEQIGSKK</sequence>
<keyword id="KW-0325">Glycoprotein</keyword>
<keyword id="KW-1185">Reference proteome</keyword>
<keyword id="KW-0732">Signal</keyword>